<accession>Q9FZW7</accession>
<comment type="function">
    <text evidence="1">Assembles to form a prolate capsid of about 45x54 nm, with a T=3, Q=5 symmetry.</text>
</comment>
<comment type="subcellular location">
    <subcellularLocation>
        <location evidence="1">Virion</location>
    </subcellularLocation>
    <text evidence="1">Forms the capsid shell which contains about 218 major capsid proteins.</text>
</comment>
<comment type="similarity">
    <text evidence="2">Belongs to the phi29 phage major capsid protein family.</text>
</comment>
<keyword id="KW-0167">Capsid protein</keyword>
<keyword id="KW-0426">Late protein</keyword>
<keyword id="KW-1185">Reference proteome</keyword>
<keyword id="KW-1146">T=13 icosahedral capsid protein</keyword>
<keyword id="KW-0946">Virion</keyword>
<reference key="1">
    <citation type="journal article" date="2001" name="Microbiol. Mol. Biol. Rev.">
        <title>Phi29 family of phages.</title>
        <authorList>
            <person name="Meijer W.J.J."/>
            <person name="Horcajadas J.A."/>
            <person name="Salas M."/>
        </authorList>
    </citation>
    <scope>NUCLEOTIDE SEQUENCE [GENOMIC DNA]</scope>
</reference>
<sequence length="472" mass="53022">MSRISIQDFKESLGITESYDIINAIINENPRFSEFSTLANAQDVANFGIGLLADKTLQNDFIHTLVDRIGLVVVHHKLMQNPLKIFKKGTLEYGRKIEEIFTDLTREHVYDPEKAETEVFKREIPNVKTLFHERDRQVFYKQTISDQQLKTAFTNAQKFDEFLSTIVTSIYNSAEVDEFRYTKLLIDNYFSKNLFKIVPVSVDPATGIVNTKEFLAKTRATATKMTLPMGTRDFNSMAVHTRTDMDDLYIIMDADTQAEVDVNELASAFNLNKADFIGRRILIDGFASTGLKAVMVDKDFFMLYDQVFRMESQRNAQGMYWNYYLHVWQVLSTSRFANAVAFVDSALIDGDVSQVIVTPTVGSLKSGKSLDMEAIIRTITPNVQIEDVEWSLENVGLSSAEYATVSITANENKTGAKLVSAQPLPVGGDVRVKVTVTDPKNNKDIEGEAHISIIPDFNATPIQTPVDPPSGE</sequence>
<feature type="chain" id="PRO_0000106574" description="Major capsid protein">
    <location>
        <begin position="1"/>
        <end position="472"/>
    </location>
</feature>
<organism>
    <name type="scientific">Bacillus phage GA-1</name>
    <name type="common">Bacteriophage GA-1</name>
    <dbReference type="NCBI Taxonomy" id="2679898"/>
    <lineage>
        <taxon>Viruses</taxon>
        <taxon>Duplodnaviria</taxon>
        <taxon>Heunggongvirae</taxon>
        <taxon>Uroviricota</taxon>
        <taxon>Caudoviricetes</taxon>
        <taxon>Salasmaviridae</taxon>
        <taxon>Tatarstanvirinae</taxon>
        <taxon>Gaunavirus</taxon>
        <taxon>Gaunavirus GA1</taxon>
    </lineage>
</organism>
<protein>
    <recommendedName>
        <fullName evidence="1">Major capsid protein</fullName>
    </recommendedName>
    <alternativeName>
        <fullName evidence="1">Gene product 8</fullName>
        <shortName evidence="1">gp8</shortName>
    </alternativeName>
    <alternativeName>
        <fullName evidence="2">Major head protein</fullName>
    </alternativeName>
</protein>
<evidence type="ECO:0000250" key="1">
    <source>
        <dbReference type="UniProtKB" id="P13849"/>
    </source>
</evidence>
<evidence type="ECO:0000305" key="2"/>
<gene>
    <name type="primary">8</name>
</gene>
<organismHost>
    <name type="scientific">Bacillus subtilis</name>
    <dbReference type="NCBI Taxonomy" id="1423"/>
</organismHost>
<dbReference type="EMBL" id="X96987">
    <property type="protein sequence ID" value="CAC21529.1"/>
    <property type="molecule type" value="Genomic_DNA"/>
</dbReference>
<dbReference type="SMR" id="Q9FZW7"/>
<dbReference type="KEGG" id="vg:919909"/>
<dbReference type="Proteomes" id="UP000002580">
    <property type="component" value="Segment"/>
</dbReference>
<dbReference type="GO" id="GO:0039621">
    <property type="term" value="C:T=13 icosahedral viral capsid"/>
    <property type="evidence" value="ECO:0007669"/>
    <property type="project" value="UniProtKB-KW"/>
</dbReference>
<proteinExistence type="inferred from homology"/>
<name>CAPSD_BPGA1</name>